<feature type="chain" id="PRO_1000099442" description="Isopentenyl-diphosphate Delta-isomerase">
    <location>
        <begin position="1"/>
        <end position="181"/>
    </location>
</feature>
<feature type="domain" description="Nudix hydrolase">
    <location>
        <begin position="30"/>
        <end position="164"/>
    </location>
</feature>
<feature type="active site" evidence="1">
    <location>
        <position position="67"/>
    </location>
</feature>
<feature type="active site" evidence="1">
    <location>
        <position position="116"/>
    </location>
</feature>
<feature type="binding site" evidence="1">
    <location>
        <position position="25"/>
    </location>
    <ligand>
        <name>Mn(2+)</name>
        <dbReference type="ChEBI" id="CHEBI:29035"/>
    </ligand>
</feature>
<feature type="binding site" evidence="1">
    <location>
        <position position="32"/>
    </location>
    <ligand>
        <name>Mn(2+)</name>
        <dbReference type="ChEBI" id="CHEBI:29035"/>
    </ligand>
</feature>
<feature type="binding site" evidence="1">
    <location>
        <position position="69"/>
    </location>
    <ligand>
        <name>Mn(2+)</name>
        <dbReference type="ChEBI" id="CHEBI:29035"/>
    </ligand>
</feature>
<feature type="binding site" evidence="1">
    <location>
        <position position="87"/>
    </location>
    <ligand>
        <name>Mg(2+)</name>
        <dbReference type="ChEBI" id="CHEBI:18420"/>
    </ligand>
</feature>
<feature type="binding site" evidence="1">
    <location>
        <position position="114"/>
    </location>
    <ligand>
        <name>Mn(2+)</name>
        <dbReference type="ChEBI" id="CHEBI:29035"/>
    </ligand>
</feature>
<feature type="binding site" evidence="1">
    <location>
        <position position="116"/>
    </location>
    <ligand>
        <name>Mn(2+)</name>
        <dbReference type="ChEBI" id="CHEBI:29035"/>
    </ligand>
</feature>
<keyword id="KW-0963">Cytoplasm</keyword>
<keyword id="KW-0413">Isomerase</keyword>
<keyword id="KW-0414">Isoprene biosynthesis</keyword>
<keyword id="KW-0460">Magnesium</keyword>
<keyword id="KW-0464">Manganese</keyword>
<keyword id="KW-0479">Metal-binding</keyword>
<reference key="1">
    <citation type="journal article" date="2008" name="Genome Res.">
        <title>Comparative genome analysis of Salmonella enteritidis PT4 and Salmonella gallinarum 287/91 provides insights into evolutionary and host adaptation pathways.</title>
        <authorList>
            <person name="Thomson N.R."/>
            <person name="Clayton D.J."/>
            <person name="Windhorst D."/>
            <person name="Vernikos G."/>
            <person name="Davidson S."/>
            <person name="Churcher C."/>
            <person name="Quail M.A."/>
            <person name="Stevens M."/>
            <person name="Jones M.A."/>
            <person name="Watson M."/>
            <person name="Barron A."/>
            <person name="Layton A."/>
            <person name="Pickard D."/>
            <person name="Kingsley R.A."/>
            <person name="Bignell A."/>
            <person name="Clark L."/>
            <person name="Harris B."/>
            <person name="Ormond D."/>
            <person name="Abdellah Z."/>
            <person name="Brooks K."/>
            <person name="Cherevach I."/>
            <person name="Chillingworth T."/>
            <person name="Woodward J."/>
            <person name="Norberczak H."/>
            <person name="Lord A."/>
            <person name="Arrowsmith C."/>
            <person name="Jagels K."/>
            <person name="Moule S."/>
            <person name="Mungall K."/>
            <person name="Saunders M."/>
            <person name="Whitehead S."/>
            <person name="Chabalgoity J.A."/>
            <person name="Maskell D."/>
            <person name="Humphreys T."/>
            <person name="Roberts M."/>
            <person name="Barrow P.A."/>
            <person name="Dougan G."/>
            <person name="Parkhill J."/>
        </authorList>
    </citation>
    <scope>NUCLEOTIDE SEQUENCE [LARGE SCALE GENOMIC DNA]</scope>
    <source>
        <strain>P125109</strain>
    </source>
</reference>
<protein>
    <recommendedName>
        <fullName evidence="1">Isopentenyl-diphosphate Delta-isomerase</fullName>
        <shortName evidence="1">IPP isomerase</shortName>
        <ecNumber evidence="1">5.3.3.2</ecNumber>
    </recommendedName>
    <alternativeName>
        <fullName evidence="1">IPP:DMAPP isomerase</fullName>
    </alternativeName>
    <alternativeName>
        <fullName evidence="1">Isopentenyl pyrophosphate isomerase</fullName>
    </alternativeName>
</protein>
<sequence>MTEEHVVLLDEQDKPSGTLEKYAAHTLNTPLHLAFSCWLFNEDGQLLVTRRSLSKKAWPGVWTNSVCGHPQQGETTEEAIIRRCRFELGVEITDLTPVYPHFSYRATDPNGIVENEVCPVFAARATSVLQVNSEEVMDYQWSEFKSVWKSLLATPWAFSPWMVMQASDEQARERLLNYCQR</sequence>
<evidence type="ECO:0000255" key="1">
    <source>
        <dbReference type="HAMAP-Rule" id="MF_00202"/>
    </source>
</evidence>
<name>IDI_SALEP</name>
<accession>B5QXG6</accession>
<comment type="function">
    <text evidence="1">Catalyzes the 1,3-allylic rearrangement of the homoallylic substrate isopentenyl (IPP) to its highly electrophilic allylic isomer, dimethylallyl diphosphate (DMAPP).</text>
</comment>
<comment type="catalytic activity">
    <reaction evidence="1">
        <text>isopentenyl diphosphate = dimethylallyl diphosphate</text>
        <dbReference type="Rhea" id="RHEA:23284"/>
        <dbReference type="ChEBI" id="CHEBI:57623"/>
        <dbReference type="ChEBI" id="CHEBI:128769"/>
        <dbReference type="EC" id="5.3.3.2"/>
    </reaction>
</comment>
<comment type="cofactor">
    <cofactor evidence="1">
        <name>Mg(2+)</name>
        <dbReference type="ChEBI" id="CHEBI:18420"/>
    </cofactor>
    <text evidence="1">Binds 1 Mg(2+) ion per subunit. The magnesium ion binds only when substrate is bound.</text>
</comment>
<comment type="cofactor">
    <cofactor evidence="1">
        <name>Mn(2+)</name>
        <dbReference type="ChEBI" id="CHEBI:29035"/>
    </cofactor>
    <text evidence="1">Binds 1 Mn(2+) ion per subunit.</text>
</comment>
<comment type="pathway">
    <text evidence="1">Isoprenoid biosynthesis; dimethylallyl diphosphate biosynthesis; dimethylallyl diphosphate from isopentenyl diphosphate: step 1/1.</text>
</comment>
<comment type="subunit">
    <text evidence="1">Homodimer.</text>
</comment>
<comment type="subcellular location">
    <subcellularLocation>
        <location evidence="1">Cytoplasm</location>
    </subcellularLocation>
</comment>
<comment type="similarity">
    <text evidence="1">Belongs to the IPP isomerase type 1 family.</text>
</comment>
<gene>
    <name evidence="1" type="primary">idi</name>
    <name type="ordered locus">SEN2882</name>
</gene>
<organism>
    <name type="scientific">Salmonella enteritidis PT4 (strain P125109)</name>
    <dbReference type="NCBI Taxonomy" id="550537"/>
    <lineage>
        <taxon>Bacteria</taxon>
        <taxon>Pseudomonadati</taxon>
        <taxon>Pseudomonadota</taxon>
        <taxon>Gammaproteobacteria</taxon>
        <taxon>Enterobacterales</taxon>
        <taxon>Enterobacteriaceae</taxon>
        <taxon>Salmonella</taxon>
    </lineage>
</organism>
<proteinExistence type="inferred from homology"/>
<dbReference type="EC" id="5.3.3.2" evidence="1"/>
<dbReference type="EMBL" id="AM933172">
    <property type="protein sequence ID" value="CAR34460.1"/>
    <property type="molecule type" value="Genomic_DNA"/>
</dbReference>
<dbReference type="RefSeq" id="WP_000133994.1">
    <property type="nucleotide sequence ID" value="NC_011294.1"/>
</dbReference>
<dbReference type="SMR" id="B5QXG6"/>
<dbReference type="KEGG" id="set:SEN2882"/>
<dbReference type="HOGENOM" id="CLU_060552_2_0_6"/>
<dbReference type="UniPathway" id="UPA00059">
    <property type="reaction ID" value="UER00104"/>
</dbReference>
<dbReference type="Proteomes" id="UP000000613">
    <property type="component" value="Chromosome"/>
</dbReference>
<dbReference type="GO" id="GO:0005737">
    <property type="term" value="C:cytoplasm"/>
    <property type="evidence" value="ECO:0007669"/>
    <property type="project" value="UniProtKB-SubCell"/>
</dbReference>
<dbReference type="GO" id="GO:0004452">
    <property type="term" value="F:isopentenyl-diphosphate delta-isomerase activity"/>
    <property type="evidence" value="ECO:0007669"/>
    <property type="project" value="UniProtKB-UniRule"/>
</dbReference>
<dbReference type="GO" id="GO:0046872">
    <property type="term" value="F:metal ion binding"/>
    <property type="evidence" value="ECO:0007669"/>
    <property type="project" value="UniProtKB-KW"/>
</dbReference>
<dbReference type="GO" id="GO:0050992">
    <property type="term" value="P:dimethylallyl diphosphate biosynthetic process"/>
    <property type="evidence" value="ECO:0007669"/>
    <property type="project" value="UniProtKB-UniRule"/>
</dbReference>
<dbReference type="GO" id="GO:0008299">
    <property type="term" value="P:isoprenoid biosynthetic process"/>
    <property type="evidence" value="ECO:0007669"/>
    <property type="project" value="UniProtKB-KW"/>
</dbReference>
<dbReference type="CDD" id="cd02885">
    <property type="entry name" value="NUDIX_IPP_Isomerase"/>
    <property type="match status" value="1"/>
</dbReference>
<dbReference type="FunFam" id="3.90.79.10:FF:000009">
    <property type="entry name" value="Isopentenyl-diphosphate Delta-isomerase"/>
    <property type="match status" value="1"/>
</dbReference>
<dbReference type="Gene3D" id="3.90.79.10">
    <property type="entry name" value="Nucleoside Triphosphate Pyrophosphohydrolase"/>
    <property type="match status" value="1"/>
</dbReference>
<dbReference type="HAMAP" id="MF_00202">
    <property type="entry name" value="Idi"/>
    <property type="match status" value="1"/>
</dbReference>
<dbReference type="InterPro" id="IPR056375">
    <property type="entry name" value="Idi_bact"/>
</dbReference>
<dbReference type="InterPro" id="IPR011876">
    <property type="entry name" value="IsopentenylPP_isomerase_typ1"/>
</dbReference>
<dbReference type="InterPro" id="IPR015797">
    <property type="entry name" value="NUDIX_hydrolase-like_dom_sf"/>
</dbReference>
<dbReference type="InterPro" id="IPR000086">
    <property type="entry name" value="NUDIX_hydrolase_dom"/>
</dbReference>
<dbReference type="NCBIfam" id="TIGR02150">
    <property type="entry name" value="IPP_isom_1"/>
    <property type="match status" value="1"/>
</dbReference>
<dbReference type="NCBIfam" id="NF002995">
    <property type="entry name" value="PRK03759.1"/>
    <property type="match status" value="1"/>
</dbReference>
<dbReference type="PANTHER" id="PTHR10885">
    <property type="entry name" value="ISOPENTENYL-DIPHOSPHATE DELTA-ISOMERASE"/>
    <property type="match status" value="1"/>
</dbReference>
<dbReference type="PANTHER" id="PTHR10885:SF0">
    <property type="entry name" value="ISOPENTENYL-DIPHOSPHATE DELTA-ISOMERASE"/>
    <property type="match status" value="1"/>
</dbReference>
<dbReference type="Pfam" id="PF00293">
    <property type="entry name" value="NUDIX"/>
    <property type="match status" value="1"/>
</dbReference>
<dbReference type="PIRSF" id="PIRSF018427">
    <property type="entry name" value="Isopntndiph_ism"/>
    <property type="match status" value="1"/>
</dbReference>
<dbReference type="SUPFAM" id="SSF55811">
    <property type="entry name" value="Nudix"/>
    <property type="match status" value="1"/>
</dbReference>
<dbReference type="PROSITE" id="PS51462">
    <property type="entry name" value="NUDIX"/>
    <property type="match status" value="1"/>
</dbReference>